<organism>
    <name type="scientific">Rattus norvegicus</name>
    <name type="common">Rat</name>
    <dbReference type="NCBI Taxonomy" id="10116"/>
    <lineage>
        <taxon>Eukaryota</taxon>
        <taxon>Metazoa</taxon>
        <taxon>Chordata</taxon>
        <taxon>Craniata</taxon>
        <taxon>Vertebrata</taxon>
        <taxon>Euteleostomi</taxon>
        <taxon>Mammalia</taxon>
        <taxon>Eutheria</taxon>
        <taxon>Euarchontoglires</taxon>
        <taxon>Glires</taxon>
        <taxon>Rodentia</taxon>
        <taxon>Myomorpha</taxon>
        <taxon>Muroidea</taxon>
        <taxon>Muridae</taxon>
        <taxon>Murinae</taxon>
        <taxon>Rattus</taxon>
    </lineage>
</organism>
<comment type="function">
    <text evidence="3 4">Transcription factor that binds to the inverted palindrome 5'-GTTAATNATTAAC-3' (By similarity). Binds to the FPC element in the cAMP regulatory unit of the PLAU gene (By similarity). Transcriptional activity is increased by coactivator PCBD1 (By similarity).</text>
</comment>
<comment type="subunit">
    <text evidence="3">Binds DNA as a dimer. Can form homodimer or heterodimer with HNF1-alpha (By similarity). Interacts (via HNF-p1 domain) with PCBD1; the interaction increases its transactivation activity (By similarity).</text>
</comment>
<comment type="subcellular location">
    <subcellularLocation>
        <location>Nucleus</location>
    </subcellularLocation>
</comment>
<comment type="alternative products">
    <event type="alternative splicing"/>
    <isoform>
        <id>P23899-1</id>
        <name>1</name>
        <name>VHNF1-A</name>
        <sequence type="displayed"/>
    </isoform>
    <isoform>
        <id>P23899-2</id>
        <name>2</name>
        <name>VHNF1-B</name>
        <sequence type="described" ref="VSP_002257"/>
    </isoform>
</comment>
<comment type="tissue specificity">
    <text>Liver, kidney and intestine.</text>
</comment>
<comment type="similarity">
    <text evidence="10">Belongs to the HNF1 homeobox family.</text>
</comment>
<accession>P23899</accession>
<keyword id="KW-0010">Activator</keyword>
<keyword id="KW-0025">Alternative splicing</keyword>
<keyword id="KW-0238">DNA-binding</keyword>
<keyword id="KW-0371">Homeobox</keyword>
<keyword id="KW-0539">Nucleus</keyword>
<keyword id="KW-0597">Phosphoprotein</keyword>
<keyword id="KW-1185">Reference proteome</keyword>
<keyword id="KW-0804">Transcription</keyword>
<keyword id="KW-0805">Transcription regulation</keyword>
<feature type="chain" id="PRO_0000049124" description="Hepatocyte nuclear factor 1-beta">
    <location>
        <begin position="1"/>
        <end position="557"/>
    </location>
</feature>
<feature type="domain" description="HNF-p1" evidence="7">
    <location>
        <begin position="1"/>
        <end position="32"/>
    </location>
</feature>
<feature type="domain" description="POU-specific atypical" evidence="6">
    <location>
        <begin position="93"/>
        <end position="188"/>
    </location>
</feature>
<feature type="DNA-binding region" description="Homeobox; HNF1-type" evidence="5">
    <location>
        <begin position="231"/>
        <end position="311"/>
    </location>
</feature>
<feature type="region of interest" description="Dimerization" evidence="1">
    <location>
        <begin position="1"/>
        <end position="31"/>
    </location>
</feature>
<feature type="region of interest" description="Disordered" evidence="8">
    <location>
        <begin position="66"/>
        <end position="85"/>
    </location>
</feature>
<feature type="region of interest" description="Disordered" evidence="8">
    <location>
        <begin position="324"/>
        <end position="370"/>
    </location>
</feature>
<feature type="compositionally biased region" description="Polar residues" evidence="8">
    <location>
        <begin position="354"/>
        <end position="370"/>
    </location>
</feature>
<feature type="modified residue" description="Phosphoserine" evidence="11">
    <location>
        <position position="49"/>
    </location>
</feature>
<feature type="modified residue" description="Phosphoserine" evidence="2">
    <location>
        <position position="52"/>
    </location>
</feature>
<feature type="modified residue" description="Phosphoserine" evidence="11">
    <location>
        <position position="75"/>
    </location>
</feature>
<feature type="modified residue" description="Phosphoserine" evidence="11">
    <location>
        <position position="80"/>
    </location>
</feature>
<feature type="splice variant" id="VSP_002257" description="In isoform 2." evidence="9">
    <location>
        <begin position="183"/>
        <end position="208"/>
    </location>
</feature>
<dbReference type="EMBL" id="X56546">
    <property type="protein sequence ID" value="CAA39886.1"/>
    <property type="molecule type" value="mRNA"/>
</dbReference>
<dbReference type="EMBL" id="BC081826">
    <property type="protein sequence ID" value="AAH81826.1"/>
    <property type="molecule type" value="mRNA"/>
</dbReference>
<dbReference type="PIR" id="S15342">
    <property type="entry name" value="S15342"/>
</dbReference>
<dbReference type="RefSeq" id="NP_037235.1">
    <molecule id="P23899-1"/>
    <property type="nucleotide sequence ID" value="NM_013103.2"/>
</dbReference>
<dbReference type="BMRB" id="P23899"/>
<dbReference type="SMR" id="P23899"/>
<dbReference type="FunCoup" id="P23899">
    <property type="interactions" value="85"/>
</dbReference>
<dbReference type="STRING" id="10116.ENSRNOP00000046025"/>
<dbReference type="iPTMnet" id="P23899"/>
<dbReference type="PhosphoSitePlus" id="P23899"/>
<dbReference type="GeneID" id="25640"/>
<dbReference type="KEGG" id="rno:25640"/>
<dbReference type="AGR" id="RGD:3830"/>
<dbReference type="CTD" id="6928"/>
<dbReference type="RGD" id="3830">
    <property type="gene designation" value="Hnf1b"/>
</dbReference>
<dbReference type="VEuPathDB" id="HostDB:ENSRNOG00000002598"/>
<dbReference type="HOGENOM" id="CLU_035503_0_0_1"/>
<dbReference type="InParanoid" id="P23899"/>
<dbReference type="OrthoDB" id="10069265at2759"/>
<dbReference type="PhylomeDB" id="P23899"/>
<dbReference type="PRO" id="PR:P23899"/>
<dbReference type="Proteomes" id="UP000002494">
    <property type="component" value="Chromosome 10"/>
</dbReference>
<dbReference type="Bgee" id="ENSRNOG00000002598">
    <property type="expression patterns" value="Expressed in kidney and 15 other cell types or tissues"/>
</dbReference>
<dbReference type="ExpressionAtlas" id="P23899">
    <property type="expression patterns" value="baseline and differential"/>
</dbReference>
<dbReference type="GO" id="GO:0005634">
    <property type="term" value="C:nucleus"/>
    <property type="evidence" value="ECO:0000250"/>
    <property type="project" value="UniProtKB"/>
</dbReference>
<dbReference type="GO" id="GO:0005667">
    <property type="term" value="C:transcription regulator complex"/>
    <property type="evidence" value="ECO:0000266"/>
    <property type="project" value="RGD"/>
</dbReference>
<dbReference type="GO" id="GO:0000987">
    <property type="term" value="F:cis-regulatory region sequence-specific DNA binding"/>
    <property type="evidence" value="ECO:0000314"/>
    <property type="project" value="RGD"/>
</dbReference>
<dbReference type="GO" id="GO:0003677">
    <property type="term" value="F:DNA binding"/>
    <property type="evidence" value="ECO:0000250"/>
    <property type="project" value="UniProtKB"/>
</dbReference>
<dbReference type="GO" id="GO:0003700">
    <property type="term" value="F:DNA-binding transcription factor activity"/>
    <property type="evidence" value="ECO:0000250"/>
    <property type="project" value="UniProtKB"/>
</dbReference>
<dbReference type="GO" id="GO:0000981">
    <property type="term" value="F:DNA-binding transcription factor activity, RNA polymerase II-specific"/>
    <property type="evidence" value="ECO:0000314"/>
    <property type="project" value="RGD"/>
</dbReference>
<dbReference type="GO" id="GO:0042802">
    <property type="term" value="F:identical protein binding"/>
    <property type="evidence" value="ECO:0000353"/>
    <property type="project" value="RGD"/>
</dbReference>
<dbReference type="GO" id="GO:1990841">
    <property type="term" value="F:promoter-specific chromatin binding"/>
    <property type="evidence" value="ECO:0000266"/>
    <property type="project" value="RGD"/>
</dbReference>
<dbReference type="GO" id="GO:0042803">
    <property type="term" value="F:protein homodimerization activity"/>
    <property type="evidence" value="ECO:0000250"/>
    <property type="project" value="UniProtKB"/>
</dbReference>
<dbReference type="GO" id="GO:0044877">
    <property type="term" value="F:protein-containing complex binding"/>
    <property type="evidence" value="ECO:0000314"/>
    <property type="project" value="RGD"/>
</dbReference>
<dbReference type="GO" id="GO:0000978">
    <property type="term" value="F:RNA polymerase II cis-regulatory region sequence-specific DNA binding"/>
    <property type="evidence" value="ECO:0000318"/>
    <property type="project" value="GO_Central"/>
</dbReference>
<dbReference type="GO" id="GO:0043565">
    <property type="term" value="F:sequence-specific DNA binding"/>
    <property type="evidence" value="ECO:0000314"/>
    <property type="project" value="RGD"/>
</dbReference>
<dbReference type="GO" id="GO:0000976">
    <property type="term" value="F:transcription cis-regulatory region binding"/>
    <property type="evidence" value="ECO:0000266"/>
    <property type="project" value="RGD"/>
</dbReference>
<dbReference type="GO" id="GO:0009952">
    <property type="term" value="P:anterior/posterior pattern specification"/>
    <property type="evidence" value="ECO:0000266"/>
    <property type="project" value="RGD"/>
</dbReference>
<dbReference type="GO" id="GO:0006915">
    <property type="term" value="P:apoptotic process"/>
    <property type="evidence" value="ECO:0000266"/>
    <property type="project" value="RGD"/>
</dbReference>
<dbReference type="GO" id="GO:0048754">
    <property type="term" value="P:branching morphogenesis of an epithelial tube"/>
    <property type="evidence" value="ECO:0000266"/>
    <property type="project" value="RGD"/>
</dbReference>
<dbReference type="GO" id="GO:0032922">
    <property type="term" value="P:circadian regulation of gene expression"/>
    <property type="evidence" value="ECO:0000314"/>
    <property type="project" value="RGD"/>
</dbReference>
<dbReference type="GO" id="GO:0048557">
    <property type="term" value="P:embryonic digestive tract morphogenesis"/>
    <property type="evidence" value="ECO:0000266"/>
    <property type="project" value="RGD"/>
</dbReference>
<dbReference type="GO" id="GO:0048598">
    <property type="term" value="P:embryonic morphogenesis"/>
    <property type="evidence" value="ECO:0000314"/>
    <property type="project" value="RGD"/>
</dbReference>
<dbReference type="GO" id="GO:0031018">
    <property type="term" value="P:endocrine pancreas development"/>
    <property type="evidence" value="ECO:0000250"/>
    <property type="project" value="UniProtKB"/>
</dbReference>
<dbReference type="GO" id="GO:0007492">
    <property type="term" value="P:endoderm development"/>
    <property type="evidence" value="ECO:0000266"/>
    <property type="project" value="RGD"/>
</dbReference>
<dbReference type="GO" id="GO:0001714">
    <property type="term" value="P:endodermal cell fate specification"/>
    <property type="evidence" value="ECO:0000266"/>
    <property type="project" value="RGD"/>
</dbReference>
<dbReference type="GO" id="GO:0050673">
    <property type="term" value="P:epithelial cell proliferation"/>
    <property type="evidence" value="ECO:0000266"/>
    <property type="project" value="RGD"/>
</dbReference>
<dbReference type="GO" id="GO:0060429">
    <property type="term" value="P:epithelium development"/>
    <property type="evidence" value="ECO:0000266"/>
    <property type="project" value="RGD"/>
</dbReference>
<dbReference type="GO" id="GO:0010467">
    <property type="term" value="P:gene expression"/>
    <property type="evidence" value="ECO:0000266"/>
    <property type="project" value="RGD"/>
</dbReference>
<dbReference type="GO" id="GO:0048806">
    <property type="term" value="P:genitalia development"/>
    <property type="evidence" value="ECO:0000250"/>
    <property type="project" value="UniProtKB"/>
</dbReference>
<dbReference type="GO" id="GO:0061017">
    <property type="term" value="P:hepatoblast differentiation"/>
    <property type="evidence" value="ECO:0000266"/>
    <property type="project" value="RGD"/>
</dbReference>
<dbReference type="GO" id="GO:0070365">
    <property type="term" value="P:hepatocyte differentiation"/>
    <property type="evidence" value="ECO:0000270"/>
    <property type="project" value="RGD"/>
</dbReference>
<dbReference type="GO" id="GO:0030902">
    <property type="term" value="P:hindbrain development"/>
    <property type="evidence" value="ECO:0000266"/>
    <property type="project" value="RGD"/>
</dbReference>
<dbReference type="GO" id="GO:0001826">
    <property type="term" value="P:inner cell mass cell differentiation"/>
    <property type="evidence" value="ECO:0000266"/>
    <property type="project" value="RGD"/>
</dbReference>
<dbReference type="GO" id="GO:0030073">
    <property type="term" value="P:insulin secretion"/>
    <property type="evidence" value="ECO:0000266"/>
    <property type="project" value="RGD"/>
</dbReference>
<dbReference type="GO" id="GO:0001822">
    <property type="term" value="P:kidney development"/>
    <property type="evidence" value="ECO:0000250"/>
    <property type="project" value="UniProtKB"/>
</dbReference>
<dbReference type="GO" id="GO:0060993">
    <property type="term" value="P:kidney morphogenesis"/>
    <property type="evidence" value="ECO:0000266"/>
    <property type="project" value="RGD"/>
</dbReference>
<dbReference type="GO" id="GO:0001889">
    <property type="term" value="P:liver development"/>
    <property type="evidence" value="ECO:0000266"/>
    <property type="project" value="RGD"/>
</dbReference>
<dbReference type="GO" id="GO:1900200">
    <property type="term" value="P:mesenchymal cell apoptotic process involved in metanephros development"/>
    <property type="evidence" value="ECO:0000266"/>
    <property type="project" value="RGD"/>
</dbReference>
<dbReference type="GO" id="GO:0072177">
    <property type="term" value="P:mesonephric duct development"/>
    <property type="evidence" value="ECO:0000266"/>
    <property type="project" value="RGD"/>
</dbReference>
<dbReference type="GO" id="GO:0072181">
    <property type="term" value="P:mesonephric duct formation"/>
    <property type="evidence" value="ECO:0000266"/>
    <property type="project" value="RGD"/>
</dbReference>
<dbReference type="GO" id="GO:0072164">
    <property type="term" value="P:mesonephric tubule development"/>
    <property type="evidence" value="ECO:0000266"/>
    <property type="project" value="RGD"/>
</dbReference>
<dbReference type="GO" id="GO:0043066">
    <property type="term" value="P:negative regulation of apoptotic process"/>
    <property type="evidence" value="ECO:0000266"/>
    <property type="project" value="RGD"/>
</dbReference>
<dbReference type="GO" id="GO:0061296">
    <property type="term" value="P:negative regulation of mesenchymal cell apoptotic process involved in mesonephric nephron morphogenesis"/>
    <property type="evidence" value="ECO:0000266"/>
    <property type="project" value="RGD"/>
</dbReference>
<dbReference type="GO" id="GO:1900212">
    <property type="term" value="P:negative regulation of mesenchymal cell apoptotic process involved in metanephros development"/>
    <property type="evidence" value="ECO:0000266"/>
    <property type="project" value="RGD"/>
</dbReference>
<dbReference type="GO" id="GO:0000122">
    <property type="term" value="P:negative regulation of transcription by RNA polymerase II"/>
    <property type="evidence" value="ECO:0000266"/>
    <property type="project" value="RGD"/>
</dbReference>
<dbReference type="GO" id="GO:0072176">
    <property type="term" value="P:nephric duct development"/>
    <property type="evidence" value="ECO:0000266"/>
    <property type="project" value="RGD"/>
</dbReference>
<dbReference type="GO" id="GO:0072179">
    <property type="term" value="P:nephric duct formation"/>
    <property type="evidence" value="ECO:0000266"/>
    <property type="project" value="RGD"/>
</dbReference>
<dbReference type="GO" id="GO:0007219">
    <property type="term" value="P:Notch signaling pathway"/>
    <property type="evidence" value="ECO:0000266"/>
    <property type="project" value="RGD"/>
</dbReference>
<dbReference type="GO" id="GO:0045893">
    <property type="term" value="P:positive regulation of DNA-templated transcription"/>
    <property type="evidence" value="ECO:0000250"/>
    <property type="project" value="UniProtKB"/>
</dbReference>
<dbReference type="GO" id="GO:0010628">
    <property type="term" value="P:positive regulation of gene expression"/>
    <property type="evidence" value="ECO:0000266"/>
    <property type="project" value="RGD"/>
</dbReference>
<dbReference type="GO" id="GO:0045944">
    <property type="term" value="P:positive regulation of transcription by RNA polymerase II"/>
    <property type="evidence" value="ECO:0000314"/>
    <property type="project" value="RGD"/>
</dbReference>
<dbReference type="GO" id="GO:0060261">
    <property type="term" value="P:positive regulation of transcription initiation by RNA polymerase II"/>
    <property type="evidence" value="ECO:0000266"/>
    <property type="project" value="RGD"/>
</dbReference>
<dbReference type="GO" id="GO:0039020">
    <property type="term" value="P:pronephric nephron tubule development"/>
    <property type="evidence" value="ECO:0000266"/>
    <property type="project" value="RGD"/>
</dbReference>
<dbReference type="GO" id="GO:0048793">
    <property type="term" value="P:pronephros development"/>
    <property type="evidence" value="ECO:0000266"/>
    <property type="project" value="RGD"/>
</dbReference>
<dbReference type="GO" id="GO:0065004">
    <property type="term" value="P:protein-DNA complex assembly"/>
    <property type="evidence" value="ECO:0000315"/>
    <property type="project" value="RGD"/>
</dbReference>
<dbReference type="GO" id="GO:0072095">
    <property type="term" value="P:regulation of branch elongation involved in ureteric bud branching"/>
    <property type="evidence" value="ECO:0000266"/>
    <property type="project" value="RGD"/>
</dbReference>
<dbReference type="GO" id="GO:0035565">
    <property type="term" value="P:regulation of pronephros size"/>
    <property type="evidence" value="ECO:0000266"/>
    <property type="project" value="RGD"/>
</dbReference>
<dbReference type="GO" id="GO:0006357">
    <property type="term" value="P:regulation of transcription by RNA polymerase II"/>
    <property type="evidence" value="ECO:0000318"/>
    <property type="project" value="GO_Central"/>
</dbReference>
<dbReference type="GO" id="GO:0030111">
    <property type="term" value="P:regulation of Wnt signaling pathway"/>
    <property type="evidence" value="ECO:0000266"/>
    <property type="project" value="RGD"/>
</dbReference>
<dbReference type="GO" id="GO:1904614">
    <property type="term" value="P:response to biphenyl"/>
    <property type="evidence" value="ECO:0000270"/>
    <property type="project" value="RGD"/>
</dbReference>
<dbReference type="GO" id="GO:0009743">
    <property type="term" value="P:response to carbohydrate"/>
    <property type="evidence" value="ECO:0000270"/>
    <property type="project" value="RGD"/>
</dbReference>
<dbReference type="GO" id="GO:0009749">
    <property type="term" value="P:response to glucose"/>
    <property type="evidence" value="ECO:0000266"/>
    <property type="project" value="RGD"/>
</dbReference>
<dbReference type="GO" id="GO:0009410">
    <property type="term" value="P:response to xenobiotic stimulus"/>
    <property type="evidence" value="ECO:0000270"/>
    <property type="project" value="RGD"/>
</dbReference>
<dbReference type="GO" id="GO:0060677">
    <property type="term" value="P:ureteric bud elongation"/>
    <property type="evidence" value="ECO:0000266"/>
    <property type="project" value="RGD"/>
</dbReference>
<dbReference type="CDD" id="cd00086">
    <property type="entry name" value="homeodomain"/>
    <property type="match status" value="1"/>
</dbReference>
<dbReference type="FunFam" id="1.10.10.60:FF:000043">
    <property type="entry name" value="Hepatocyte nuclear factor 1-beta"/>
    <property type="match status" value="1"/>
</dbReference>
<dbReference type="FunFam" id="1.10.260.40:FF:000009">
    <property type="entry name" value="Hepatocyte nuclear factor 1-beta"/>
    <property type="match status" value="1"/>
</dbReference>
<dbReference type="Gene3D" id="1.10.10.60">
    <property type="entry name" value="Homeodomain-like"/>
    <property type="match status" value="1"/>
</dbReference>
<dbReference type="Gene3D" id="1.10.260.40">
    <property type="entry name" value="lambda repressor-like DNA-binding domains"/>
    <property type="match status" value="1"/>
</dbReference>
<dbReference type="InterPro" id="IPR001356">
    <property type="entry name" value="HD"/>
</dbReference>
<dbReference type="InterPro" id="IPR039066">
    <property type="entry name" value="HNF-1"/>
</dbReference>
<dbReference type="InterPro" id="IPR006899">
    <property type="entry name" value="HNF-1_N"/>
</dbReference>
<dbReference type="InterPro" id="IPR044869">
    <property type="entry name" value="HNF-1_POU"/>
</dbReference>
<dbReference type="InterPro" id="IPR023219">
    <property type="entry name" value="HNF1_dimer_N_dom_sf"/>
</dbReference>
<dbReference type="InterPro" id="IPR006897">
    <property type="entry name" value="HNF1b_C"/>
</dbReference>
<dbReference type="InterPro" id="IPR044866">
    <property type="entry name" value="HNF_P1"/>
</dbReference>
<dbReference type="InterPro" id="IPR009057">
    <property type="entry name" value="Homeodomain-like_sf"/>
</dbReference>
<dbReference type="InterPro" id="IPR010982">
    <property type="entry name" value="Lambda_DNA-bd_dom_sf"/>
</dbReference>
<dbReference type="PANTHER" id="PTHR11568">
    <property type="entry name" value="HEPATOCYTE NUCLEAR FACTOR 1"/>
    <property type="match status" value="1"/>
</dbReference>
<dbReference type="PANTHER" id="PTHR11568:SF2">
    <property type="entry name" value="HEPATOCYTE NUCLEAR FACTOR 1-BETA"/>
    <property type="match status" value="1"/>
</dbReference>
<dbReference type="Pfam" id="PF04814">
    <property type="entry name" value="HNF-1_N"/>
    <property type="match status" value="1"/>
</dbReference>
<dbReference type="Pfam" id="PF04812">
    <property type="entry name" value="HNF-1B_C"/>
    <property type="match status" value="1"/>
</dbReference>
<dbReference type="SMART" id="SM00389">
    <property type="entry name" value="HOX"/>
    <property type="match status" value="1"/>
</dbReference>
<dbReference type="SUPFAM" id="SSF100957">
    <property type="entry name" value="Dimerization cofactor of HNF-1 alpha"/>
    <property type="match status" value="1"/>
</dbReference>
<dbReference type="SUPFAM" id="SSF46689">
    <property type="entry name" value="Homeodomain-like"/>
    <property type="match status" value="1"/>
</dbReference>
<dbReference type="SUPFAM" id="SSF47413">
    <property type="entry name" value="lambda repressor-like DNA-binding domains"/>
    <property type="match status" value="1"/>
</dbReference>
<dbReference type="PROSITE" id="PS51937">
    <property type="entry name" value="HNF_P1"/>
    <property type="match status" value="1"/>
</dbReference>
<dbReference type="PROSITE" id="PS00027">
    <property type="entry name" value="HOMEOBOX_1"/>
    <property type="match status" value="1"/>
</dbReference>
<dbReference type="PROSITE" id="PS50071">
    <property type="entry name" value="HOMEOBOX_2"/>
    <property type="match status" value="1"/>
</dbReference>
<dbReference type="PROSITE" id="PS51936">
    <property type="entry name" value="POU_4"/>
    <property type="match status" value="1"/>
</dbReference>
<name>HNF1B_RAT</name>
<sequence length="557" mass="61371">MVSKLTSLQQELLSALLSSGVTKEVLIQALEELLPSPNFGVKLETLPLSPGSGADLDTKPVFHTLTNGHAKGRLSGDEGSEDGDDYDTPPILKELQALNTEEAAEQRAEVDRMLSEDPWRAAKMIKGYMQQHNIPQREVVDVTGLNQSHLSQHLNKGTPMKTQKRAALYTWYVRKQREILRQFNQTVQSSGNMTDKSSQDQLLFLFPEFSQQNQGPGQSEDACSEPTNKKMRRNRFKWGPASQQILYQAYDRQKNPSKEEREALVEECNRAECLQRGVSPSKAHGLGSNLVTEVRVYNWFANRRKEEAFRQKLAMDAYSSNQTHNLNPLLTHGSPHHQPSSSPPNKLSGVRYSQPGNNEVTSSSTISHHGNSAMVTSQSVLQQVSPASLDPGHSLLSPDSKMISVSGGGLPPVSTLTNIHSLSHHNPQQSQNLIMTPLSGVMAIAQSLNTSQAQGVPVINSVASSLAALQPVQFSQQLHSPHQQPLMQQSPGSHMAQQPFMAAVTQLQNSHMYAHKQEPPQYSHTSRFPSAMVVTDTSSINTLTSMSSSKQCPLQAW</sequence>
<proteinExistence type="evidence at protein level"/>
<reference key="1">
    <citation type="journal article" date="1991" name="EMBO J.">
        <title>vHNF1 is a homeoprotein that activates transcription and forms heterodimers with HNF1.</title>
        <authorList>
            <person name="Rey-Campos J."/>
            <person name="Chouard T."/>
            <person name="Yaniv M."/>
            <person name="Cereghini S."/>
        </authorList>
    </citation>
    <scope>NUCLEOTIDE SEQUENCE [MRNA] (ISOFORMS 1 AND 2)</scope>
    <source>
        <tissue>Liver</tissue>
    </source>
</reference>
<reference key="2">
    <citation type="journal article" date="2004" name="Genome Res.">
        <title>The status, quality, and expansion of the NIH full-length cDNA project: the Mammalian Gene Collection (MGC).</title>
        <authorList>
            <consortium name="The MGC Project Team"/>
        </authorList>
    </citation>
    <scope>NUCLEOTIDE SEQUENCE [LARGE SCALE MRNA] (ISOFORM 1)</scope>
    <source>
        <tissue>Kidney</tissue>
    </source>
</reference>
<reference key="3">
    <citation type="journal article" date="2006" name="Proc. Natl. Acad. Sci. U.S.A.">
        <title>Quantitative phosphoproteomics of vasopressin-sensitive renal cells: regulation of aquaporin-2 phosphorylation at two sites.</title>
        <authorList>
            <person name="Hoffert J.D."/>
            <person name="Pisitkun T."/>
            <person name="Wang G."/>
            <person name="Shen R.-F."/>
            <person name="Knepper M.A."/>
        </authorList>
    </citation>
    <scope>IDENTIFICATION BY MASS SPECTROMETRY [LARGE SCALE ANALYSIS]</scope>
</reference>
<reference key="4">
    <citation type="journal article" date="2012" name="Nat. Commun.">
        <title>Quantitative maps of protein phosphorylation sites across 14 different rat organs and tissues.</title>
        <authorList>
            <person name="Lundby A."/>
            <person name="Secher A."/>
            <person name="Lage K."/>
            <person name="Nordsborg N.B."/>
            <person name="Dmytriyev A."/>
            <person name="Lundby C."/>
            <person name="Olsen J.V."/>
        </authorList>
    </citation>
    <scope>PHOSPHORYLATION [LARGE SCALE ANALYSIS] AT SER-49; SER-75 AND SER-80</scope>
    <scope>IDENTIFICATION BY MASS SPECTROMETRY [LARGE SCALE ANALYSIS]</scope>
</reference>
<evidence type="ECO:0000250" key="1"/>
<evidence type="ECO:0000250" key="2">
    <source>
        <dbReference type="UniProtKB" id="P27889"/>
    </source>
</evidence>
<evidence type="ECO:0000250" key="3">
    <source>
        <dbReference type="UniProtKB" id="P35680"/>
    </source>
</evidence>
<evidence type="ECO:0000250" key="4">
    <source>
        <dbReference type="UniProtKB" id="Q03365"/>
    </source>
</evidence>
<evidence type="ECO:0000255" key="5">
    <source>
        <dbReference type="PROSITE-ProRule" id="PRU00108"/>
    </source>
</evidence>
<evidence type="ECO:0000255" key="6">
    <source>
        <dbReference type="PROSITE-ProRule" id="PRU01285"/>
    </source>
</evidence>
<evidence type="ECO:0000255" key="7">
    <source>
        <dbReference type="PROSITE-ProRule" id="PRU01286"/>
    </source>
</evidence>
<evidence type="ECO:0000256" key="8">
    <source>
        <dbReference type="SAM" id="MobiDB-lite"/>
    </source>
</evidence>
<evidence type="ECO:0000303" key="9">
    <source>
    </source>
</evidence>
<evidence type="ECO:0000305" key="10"/>
<evidence type="ECO:0007744" key="11">
    <source>
    </source>
</evidence>
<gene>
    <name type="primary">Hnf1b</name>
    <name type="synonym">Hnf-1b</name>
    <name type="synonym">Tcf2</name>
</gene>
<protein>
    <recommendedName>
        <fullName>Hepatocyte nuclear factor 1-beta</fullName>
        <shortName>HNF-1-beta</shortName>
        <shortName>HNF-1B</shortName>
    </recommendedName>
    <alternativeName>
        <fullName>Transcription factor 2</fullName>
        <shortName>TCF-2</shortName>
    </alternativeName>
    <alternativeName>
        <fullName>Variant hepatic nuclear factor 1</fullName>
        <shortName>vHNF1</shortName>
    </alternativeName>
</protein>